<reference key="1">
    <citation type="submission" date="2006-08" db="EMBL/GenBank/DDBJ databases">
        <title>An insight into the sialotranscriptome of Anopheles funestus (Giles).</title>
        <authorList>
            <person name="Calvo E."/>
            <person name="Dao A."/>
            <person name="Pham V.M."/>
            <person name="Ribeiro J.M.C."/>
        </authorList>
    </citation>
    <scope>NUCLEOTIDE SEQUENCE [LARGE SCALE MRNA]</scope>
    <source>
        <tissue>Salivary gland</tissue>
    </source>
</reference>
<comment type="similarity">
    <text evidence="2">Belongs to the TMA7 family.</text>
</comment>
<keyword id="KW-0175">Coiled coil</keyword>
<dbReference type="EMBL" id="DQ910322">
    <property type="protein sequence ID" value="ABI83744.1"/>
    <property type="molecule type" value="mRNA"/>
</dbReference>
<dbReference type="RefSeq" id="XP_049287928.1">
    <property type="nucleotide sequence ID" value="XM_049431971.1"/>
</dbReference>
<dbReference type="RefSeq" id="XP_049287929.1">
    <property type="nucleotide sequence ID" value="XM_049431972.1"/>
</dbReference>
<dbReference type="STRING" id="62324.Q06DK3"/>
<dbReference type="EnsemblMetazoa" id="AFUN019684-RA">
    <property type="protein sequence ID" value="AFUN019684-PA"/>
    <property type="gene ID" value="AFUN019684"/>
</dbReference>
<dbReference type="EnsemblMetazoa" id="AFUN2_003634.R5012">
    <property type="protein sequence ID" value="AFUN2_003634.P5012"/>
    <property type="gene ID" value="AFUN2_003634"/>
</dbReference>
<dbReference type="EnsemblMetazoa" id="AFUN2_003634.R5013">
    <property type="protein sequence ID" value="AFUN2_003634.P5013"/>
    <property type="gene ID" value="AFUN2_003634"/>
</dbReference>
<dbReference type="GeneID" id="125766219"/>
<dbReference type="VEuPathDB" id="VectorBase:AFUN019684"/>
<dbReference type="VEuPathDB" id="VectorBase:AFUN2_003634"/>
<dbReference type="InterPro" id="IPR015157">
    <property type="entry name" value="TMA7"/>
</dbReference>
<dbReference type="PANTHER" id="PTHR28632">
    <property type="entry name" value="TRANSLATION MACHINERY-ASSOCIATED PROTEIN 7"/>
    <property type="match status" value="1"/>
</dbReference>
<dbReference type="Pfam" id="PF09072">
    <property type="entry name" value="TMA7"/>
    <property type="match status" value="1"/>
</dbReference>
<evidence type="ECO:0000256" key="1">
    <source>
        <dbReference type="SAM" id="MobiDB-lite"/>
    </source>
</evidence>
<evidence type="ECO:0000305" key="2"/>
<protein>
    <recommendedName>
        <fullName>Translation machinery-associated protein 7 homolog</fullName>
    </recommendedName>
    <alternativeName>
        <fullName>Coiled-coil domain-containing protein 72 homolog</fullName>
    </alternativeName>
</protein>
<name>TMA7_ANOFN</name>
<feature type="chain" id="PRO_0000291654" description="Translation machinery-associated protein 7 homolog">
    <location>
        <begin position="1"/>
        <end position="64"/>
    </location>
</feature>
<feature type="region of interest" description="Disordered" evidence="1">
    <location>
        <begin position="1"/>
        <end position="64"/>
    </location>
</feature>
<feature type="compositionally biased region" description="Basic and acidic residues" evidence="1">
    <location>
        <begin position="27"/>
        <end position="44"/>
    </location>
</feature>
<accession>Q06DK3</accession>
<proteinExistence type="inferred from homology"/>
<organism>
    <name type="scientific">Anopheles funestus</name>
    <name type="common">African malaria mosquito</name>
    <dbReference type="NCBI Taxonomy" id="62324"/>
    <lineage>
        <taxon>Eukaryota</taxon>
        <taxon>Metazoa</taxon>
        <taxon>Ecdysozoa</taxon>
        <taxon>Arthropoda</taxon>
        <taxon>Hexapoda</taxon>
        <taxon>Insecta</taxon>
        <taxon>Pterygota</taxon>
        <taxon>Neoptera</taxon>
        <taxon>Endopterygota</taxon>
        <taxon>Diptera</taxon>
        <taxon>Nematocera</taxon>
        <taxon>Culicoidea</taxon>
        <taxon>Culicidae</taxon>
        <taxon>Anophelinae</taxon>
        <taxon>Anopheles</taxon>
    </lineage>
</organism>
<sequence>MSGREGGKKKPLKAPKKEQSEMDDDDVAFKQKQKEQQKALDAAKQKASKGGPLLQGGIKKSGKK</sequence>